<proteinExistence type="evidence at transcript level"/>
<evidence type="ECO:0000250" key="1">
    <source>
        <dbReference type="UniProtKB" id="Q04468"/>
    </source>
</evidence>
<evidence type="ECO:0000250" key="2">
    <source>
        <dbReference type="UniProtKB" id="Q94IP1"/>
    </source>
</evidence>
<evidence type="ECO:0000255" key="3"/>
<evidence type="ECO:0000305" key="4"/>
<protein>
    <recommendedName>
        <fullName>Trans-cinnamate 4-monooxygenase</fullName>
        <ecNumber evidence="1">1.14.14.91</ecNumber>
    </recommendedName>
    <alternativeName>
        <fullName>Cinnamic acid 4-hydroxylase</fullName>
        <shortName>C4H</shortName>
        <shortName>CA4H</shortName>
    </alternativeName>
    <alternativeName>
        <fullName>Cytochrome P450 73</fullName>
    </alternativeName>
    <alternativeName>
        <fullName>Cytochrome P450C4H</fullName>
    </alternativeName>
</protein>
<reference key="1">
    <citation type="submission" date="2001-04" db="EMBL/GenBank/DDBJ databases">
        <title>Molecular cloning and expression of Ruta graveolens cinnamate 4-hydroxylase cDNA.</title>
        <authorList>
            <person name="Gravot A."/>
            <person name="Gontier E."/>
            <person name="Bourgaud F."/>
            <person name="Deleury E."/>
            <person name="Goergen J.L."/>
        </authorList>
    </citation>
    <scope>NUCLEOTIDE SEQUENCE [MRNA]</scope>
</reference>
<feature type="chain" id="PRO_0000052253" description="Trans-cinnamate 4-monooxygenase">
    <location>
        <begin position="1"/>
        <end position="506"/>
    </location>
</feature>
<feature type="transmembrane region" description="Helical" evidence="3">
    <location>
        <begin position="3"/>
        <end position="23"/>
    </location>
</feature>
<feature type="binding site" evidence="2">
    <location>
        <begin position="213"/>
        <end position="218"/>
    </location>
    <ligand>
        <name>(E)-cinnamate</name>
        <dbReference type="ChEBI" id="CHEBI:15669"/>
    </ligand>
</feature>
<feature type="binding site" evidence="2">
    <location>
        <position position="306"/>
    </location>
    <ligand>
        <name>(E)-cinnamate</name>
        <dbReference type="ChEBI" id="CHEBI:15669"/>
    </ligand>
</feature>
<feature type="binding site" description="axial binding residue" evidence="2">
    <location>
        <position position="447"/>
    </location>
    <ligand>
        <name>heme</name>
        <dbReference type="ChEBI" id="CHEBI:30413"/>
    </ligand>
    <ligandPart>
        <name>Fe</name>
        <dbReference type="ChEBI" id="CHEBI:18248"/>
    </ligandPart>
</feature>
<keyword id="KW-0349">Heme</keyword>
<keyword id="KW-0408">Iron</keyword>
<keyword id="KW-0472">Membrane</keyword>
<keyword id="KW-0479">Metal-binding</keyword>
<keyword id="KW-0503">Monooxygenase</keyword>
<keyword id="KW-0560">Oxidoreductase</keyword>
<keyword id="KW-0812">Transmembrane</keyword>
<keyword id="KW-1133">Transmembrane helix</keyword>
<dbReference type="EC" id="1.14.14.91" evidence="1"/>
<dbReference type="EMBL" id="AJ309127">
    <property type="protein sequence ID" value="CAC35977.1"/>
    <property type="molecule type" value="mRNA"/>
</dbReference>
<dbReference type="SMR" id="Q9AR74"/>
<dbReference type="BRENDA" id="1.14.14.91">
    <property type="organism ID" value="5486"/>
</dbReference>
<dbReference type="UniPathway" id="UPA00825">
    <property type="reaction ID" value="UER00789"/>
</dbReference>
<dbReference type="GO" id="GO:0016020">
    <property type="term" value="C:membrane"/>
    <property type="evidence" value="ECO:0007669"/>
    <property type="project" value="UniProtKB-SubCell"/>
</dbReference>
<dbReference type="GO" id="GO:0020037">
    <property type="term" value="F:heme binding"/>
    <property type="evidence" value="ECO:0007669"/>
    <property type="project" value="InterPro"/>
</dbReference>
<dbReference type="GO" id="GO:0005506">
    <property type="term" value="F:iron ion binding"/>
    <property type="evidence" value="ECO:0007669"/>
    <property type="project" value="InterPro"/>
</dbReference>
<dbReference type="GO" id="GO:0016710">
    <property type="term" value="F:trans-cinnamate 4-monooxygenase activity"/>
    <property type="evidence" value="ECO:0007669"/>
    <property type="project" value="UniProtKB-EC"/>
</dbReference>
<dbReference type="GO" id="GO:0009808">
    <property type="term" value="P:lignin metabolic process"/>
    <property type="evidence" value="ECO:0007669"/>
    <property type="project" value="TreeGrafter"/>
</dbReference>
<dbReference type="CDD" id="cd11074">
    <property type="entry name" value="CYP73"/>
    <property type="match status" value="1"/>
</dbReference>
<dbReference type="FunFam" id="1.10.630.10:FF:000013">
    <property type="entry name" value="Trans-cinnamate 4-monooxygenase"/>
    <property type="match status" value="1"/>
</dbReference>
<dbReference type="Gene3D" id="1.10.630.10">
    <property type="entry name" value="Cytochrome P450"/>
    <property type="match status" value="1"/>
</dbReference>
<dbReference type="InterPro" id="IPR001128">
    <property type="entry name" value="Cyt_P450"/>
</dbReference>
<dbReference type="InterPro" id="IPR017972">
    <property type="entry name" value="Cyt_P450_CS"/>
</dbReference>
<dbReference type="InterPro" id="IPR002401">
    <property type="entry name" value="Cyt_P450_E_grp-I"/>
</dbReference>
<dbReference type="InterPro" id="IPR036396">
    <property type="entry name" value="Cyt_P450_sf"/>
</dbReference>
<dbReference type="PANTHER" id="PTHR47948">
    <property type="entry name" value="TRANS-CINNAMATE 4-MONOOXYGENASE"/>
    <property type="match status" value="1"/>
</dbReference>
<dbReference type="PANTHER" id="PTHR47948:SF11">
    <property type="entry name" value="TRANS-CINNAMATE 4-MONOOXYGENASE"/>
    <property type="match status" value="1"/>
</dbReference>
<dbReference type="Pfam" id="PF00067">
    <property type="entry name" value="p450"/>
    <property type="match status" value="1"/>
</dbReference>
<dbReference type="PRINTS" id="PR00463">
    <property type="entry name" value="EP450I"/>
</dbReference>
<dbReference type="PRINTS" id="PR00385">
    <property type="entry name" value="P450"/>
</dbReference>
<dbReference type="SUPFAM" id="SSF48264">
    <property type="entry name" value="Cytochrome P450"/>
    <property type="match status" value="1"/>
</dbReference>
<dbReference type="PROSITE" id="PS00086">
    <property type="entry name" value="CYTOCHROME_P450"/>
    <property type="match status" value="1"/>
</dbReference>
<name>TCMO_RUTGR</name>
<sequence length="506" mass="58105">MDLLLLEKALLGLFAAAVVAIAVSKLRGKRFKLPPGPLGFPVFGNWLQVGDDLNQRKLANLSKKFGDVYLLRMGQRNLVVVSSPEMAKEVLHTQGVEFGSRTRNVVFDIFTGKGQDMVFTVYSEHWRKMRRIMTVPFFTNKVVQQQRFNWEDEAARVVEDVKKDPQAATTGIVLRRRLQLLMYNNMYRIMFDRRFESVDDPLFNKLKALNGERSRLAQSFEYNYGDFIPILRPFLRGYLKLVKEVKERRLKLFKDYFVEERKKLTSTKSMTEENFKCAIDHVLDAQQKGEINEDNVLYIVENINVAAIETTLWSIEWGIAELVNHPDIQKKLRAEIDRVLGPDHQITEPDTHKLPYLQAVIKETLRLRMAIPLLVPHMNLNDAKLAGYDIPAESKILVNAWWLANNPAHWKDPQVFRPERFLEEESGVEANGNDFRYIPFGVGRRSCPGIILALPILGITIGRMVQNFELLPPPGQSKIDTSEKGGQFSLFILNHSTIVLKPRSSV</sequence>
<gene>
    <name type="primary">CYP73A2</name>
</gene>
<comment type="function">
    <text evidence="1">Catalyzes the first oxidative step of the phenylpropanoid pathway in higher plants by transforming trans-cinnamate into p-coumarate (By similarity). The compounds formed by this pathway are essential components for lignification, pollination, and defense against ultraviolet light, predators and pathogens (By similarity).</text>
</comment>
<comment type="catalytic activity">
    <reaction evidence="1">
        <text>(E)-cinnamate + reduced [NADPH--hemoprotein reductase] + O2 = (E)-4-coumarate + oxidized [NADPH--hemoprotein reductase] + H2O + H(+)</text>
        <dbReference type="Rhea" id="RHEA:10608"/>
        <dbReference type="Rhea" id="RHEA-COMP:11964"/>
        <dbReference type="Rhea" id="RHEA-COMP:11965"/>
        <dbReference type="ChEBI" id="CHEBI:12876"/>
        <dbReference type="ChEBI" id="CHEBI:15377"/>
        <dbReference type="ChEBI" id="CHEBI:15378"/>
        <dbReference type="ChEBI" id="CHEBI:15379"/>
        <dbReference type="ChEBI" id="CHEBI:15669"/>
        <dbReference type="ChEBI" id="CHEBI:57618"/>
        <dbReference type="ChEBI" id="CHEBI:58210"/>
        <dbReference type="EC" id="1.14.14.91"/>
    </reaction>
</comment>
<comment type="cofactor">
    <cofactor evidence="2">
        <name>heme</name>
        <dbReference type="ChEBI" id="CHEBI:30413"/>
    </cofactor>
</comment>
<comment type="pathway">
    <text evidence="4">Phenylpropanoid metabolism; trans-4-coumarate biosynthesis; trans-4-coumarate from trans-cinnamate: step 1/1.</text>
</comment>
<comment type="subcellular location">
    <subcellularLocation>
        <location evidence="3">Membrane</location>
        <topology evidence="3">Single-pass membrane protein</topology>
    </subcellularLocation>
</comment>
<comment type="similarity">
    <text evidence="4">Belongs to the cytochrome P450 family.</text>
</comment>
<accession>Q9AR74</accession>
<organism>
    <name type="scientific">Ruta graveolens</name>
    <name type="common">Common rue</name>
    <dbReference type="NCBI Taxonomy" id="37565"/>
    <lineage>
        <taxon>Eukaryota</taxon>
        <taxon>Viridiplantae</taxon>
        <taxon>Streptophyta</taxon>
        <taxon>Embryophyta</taxon>
        <taxon>Tracheophyta</taxon>
        <taxon>Spermatophyta</taxon>
        <taxon>Magnoliopsida</taxon>
        <taxon>eudicotyledons</taxon>
        <taxon>Gunneridae</taxon>
        <taxon>Pentapetalae</taxon>
        <taxon>rosids</taxon>
        <taxon>malvids</taxon>
        <taxon>Sapindales</taxon>
        <taxon>Rutaceae</taxon>
        <taxon>Rutoideae</taxon>
        <taxon>Ruta</taxon>
    </lineage>
</organism>